<comment type="function">
    <text evidence="1">Transcription factor that binds to the GCC-box pathogenesis-related promoter element. Involved in the regulation of gene expression by stress factors and by components of stress signal transduction pathways. Probably acts as a transcriptional repressor and may regulate other AtERFs (By similarity).</text>
</comment>
<comment type="subcellular location">
    <subcellularLocation>
        <location evidence="5">Nucleus</location>
    </subcellularLocation>
</comment>
<comment type="domain">
    <text evidence="1">The AP2/ERF domain binds specifically to the 5'-GCCGCC-3' motif. The affinity of this binding is higher if the seventh amino-acid of this domain is basic (By similarity).</text>
</comment>
<comment type="domain">
    <text evidence="1">Contains a slightly degenerated ERF-associated amphiphilic repression (EAR) motif, which may be involved in the activity of transcriptional repression.</text>
</comment>
<comment type="similarity">
    <text evidence="5">Belongs to the ethylene-response factor family. Class 2 subfamily.</text>
</comment>
<comment type="caution">
    <text evidence="5">Was named ERF5 but it corresponds to Arabidopsis ERF3.</text>
</comment>
<organism>
    <name type="scientific">Nicotiana tabacum</name>
    <name type="common">Common tobacco</name>
    <dbReference type="NCBI Taxonomy" id="4097"/>
    <lineage>
        <taxon>Eukaryota</taxon>
        <taxon>Viridiplantae</taxon>
        <taxon>Streptophyta</taxon>
        <taxon>Embryophyta</taxon>
        <taxon>Tracheophyta</taxon>
        <taxon>Spermatophyta</taxon>
        <taxon>Magnoliopsida</taxon>
        <taxon>eudicotyledons</taxon>
        <taxon>Gunneridae</taxon>
        <taxon>Pentapetalae</taxon>
        <taxon>asterids</taxon>
        <taxon>lamiids</taxon>
        <taxon>Solanales</taxon>
        <taxon>Solanaceae</taxon>
        <taxon>Nicotianoideae</taxon>
        <taxon>Nicotianeae</taxon>
        <taxon>Nicotiana</taxon>
    </lineage>
</organism>
<accession>Q9SXS8</accession>
<name>ERF3_TOBAC</name>
<protein>
    <recommendedName>
        <fullName>Ethylene-responsive transcription factor 3</fullName>
    </recommendedName>
    <alternativeName>
        <fullName>Ethylene-responsive element-binding factor 3 homolog</fullName>
    </alternativeName>
    <alternativeName>
        <fullName>Ethylene-responsive element-binding factor 5</fullName>
        <shortName>EREBP-5</shortName>
    </alternativeName>
    <alternativeName>
        <fullName>NtERF5</fullName>
    </alternativeName>
</protein>
<evidence type="ECO:0000250" key="1"/>
<evidence type="ECO:0000255" key="2"/>
<evidence type="ECO:0000255" key="3">
    <source>
        <dbReference type="PROSITE-ProRule" id="PRU00366"/>
    </source>
</evidence>
<evidence type="ECO:0000256" key="4">
    <source>
        <dbReference type="SAM" id="MobiDB-lite"/>
    </source>
</evidence>
<evidence type="ECO:0000305" key="5"/>
<keyword id="KW-0238">DNA-binding</keyword>
<keyword id="KW-0936">Ethylene signaling pathway</keyword>
<keyword id="KW-0539">Nucleus</keyword>
<keyword id="KW-0611">Plant defense</keyword>
<keyword id="KW-1185">Reference proteome</keyword>
<keyword id="KW-0678">Repressor</keyword>
<keyword id="KW-0804">Transcription</keyword>
<keyword id="KW-0805">Transcription regulation</keyword>
<gene>
    <name type="primary">ERF3</name>
    <name type="synonym">ERF-5</name>
    <name type="synonym">ERF5</name>
</gene>
<dbReference type="EMBL" id="AB024575">
    <property type="protein sequence ID" value="BAA76734.1"/>
    <property type="molecule type" value="mRNA"/>
</dbReference>
<dbReference type="RefSeq" id="NP_001312653.1">
    <property type="nucleotide sequence ID" value="NM_001325724.1"/>
</dbReference>
<dbReference type="SMR" id="Q9SXS8"/>
<dbReference type="STRING" id="4097.Q9SXS8"/>
<dbReference type="PaxDb" id="4097-Q9SXS8"/>
<dbReference type="GeneID" id="107802932"/>
<dbReference type="KEGG" id="nta:107802932"/>
<dbReference type="OMA" id="NQVDPFM"/>
<dbReference type="OrthoDB" id="1931494at2759"/>
<dbReference type="Proteomes" id="UP000084051">
    <property type="component" value="Unplaced"/>
</dbReference>
<dbReference type="GO" id="GO:0005634">
    <property type="term" value="C:nucleus"/>
    <property type="evidence" value="ECO:0007669"/>
    <property type="project" value="UniProtKB-SubCell"/>
</dbReference>
<dbReference type="GO" id="GO:0003677">
    <property type="term" value="F:DNA binding"/>
    <property type="evidence" value="ECO:0007669"/>
    <property type="project" value="UniProtKB-KW"/>
</dbReference>
<dbReference type="GO" id="GO:0003700">
    <property type="term" value="F:DNA-binding transcription factor activity"/>
    <property type="evidence" value="ECO:0007669"/>
    <property type="project" value="InterPro"/>
</dbReference>
<dbReference type="GO" id="GO:0006952">
    <property type="term" value="P:defense response"/>
    <property type="evidence" value="ECO:0007669"/>
    <property type="project" value="UniProtKB-KW"/>
</dbReference>
<dbReference type="GO" id="GO:0009873">
    <property type="term" value="P:ethylene-activated signaling pathway"/>
    <property type="evidence" value="ECO:0007669"/>
    <property type="project" value="UniProtKB-KW"/>
</dbReference>
<dbReference type="CDD" id="cd00018">
    <property type="entry name" value="AP2"/>
    <property type="match status" value="1"/>
</dbReference>
<dbReference type="FunFam" id="3.30.730.10:FF:000001">
    <property type="entry name" value="Ethylene-responsive transcription factor 2"/>
    <property type="match status" value="1"/>
</dbReference>
<dbReference type="Gene3D" id="3.30.730.10">
    <property type="entry name" value="AP2/ERF domain"/>
    <property type="match status" value="1"/>
</dbReference>
<dbReference type="InterPro" id="IPR001471">
    <property type="entry name" value="AP2/ERF_dom"/>
</dbReference>
<dbReference type="InterPro" id="IPR036955">
    <property type="entry name" value="AP2/ERF_dom_sf"/>
</dbReference>
<dbReference type="InterPro" id="IPR016177">
    <property type="entry name" value="DNA-bd_dom_sf"/>
</dbReference>
<dbReference type="PANTHER" id="PTHR31677">
    <property type="entry name" value="AP2 DOMAIN CLASS TRANSCRIPTION FACTOR"/>
    <property type="match status" value="1"/>
</dbReference>
<dbReference type="PANTHER" id="PTHR31677:SF252">
    <property type="entry name" value="ETHYLENE-RESPONSIVE TRANSCRIPTION FACTOR 3"/>
    <property type="match status" value="1"/>
</dbReference>
<dbReference type="Pfam" id="PF00847">
    <property type="entry name" value="AP2"/>
    <property type="match status" value="1"/>
</dbReference>
<dbReference type="PRINTS" id="PR00367">
    <property type="entry name" value="ETHRSPELEMNT"/>
</dbReference>
<dbReference type="SMART" id="SM00380">
    <property type="entry name" value="AP2"/>
    <property type="match status" value="1"/>
</dbReference>
<dbReference type="SUPFAM" id="SSF54171">
    <property type="entry name" value="DNA-binding domain"/>
    <property type="match status" value="1"/>
</dbReference>
<dbReference type="PROSITE" id="PS51032">
    <property type="entry name" value="AP2_ERF"/>
    <property type="match status" value="1"/>
</dbReference>
<reference key="1">
    <citation type="journal article" date="2000" name="DNA Seq.">
        <title>Cloning of cDNA encoding ethylene-responsive element binding protein-5 in the cultured cells of Nicotiana tabacum.</title>
        <authorList>
            <person name="Ashida Y."/>
            <person name="Yokobatake N."/>
            <person name="Kohchi C."/>
            <person name="Shimoda K."/>
            <person name="Hirata T."/>
        </authorList>
    </citation>
    <scope>NUCLEOTIDE SEQUENCE [MRNA]</scope>
</reference>
<proteinExistence type="evidence at transcript level"/>
<feature type="chain" id="PRO_0000112553" description="Ethylene-responsive transcription factor 3">
    <location>
        <begin position="1"/>
        <end position="225"/>
    </location>
</feature>
<feature type="DNA-binding region" description="AP2/ERF" evidence="3">
    <location>
        <begin position="27"/>
        <end position="84"/>
    </location>
</feature>
<feature type="region of interest" description="Disordered" evidence="4">
    <location>
        <begin position="1"/>
        <end position="29"/>
    </location>
</feature>
<feature type="region of interest" description="Disordered" evidence="4">
    <location>
        <begin position="82"/>
        <end position="193"/>
    </location>
</feature>
<feature type="short sequence motif" description="EAR-like (transcriptional repression)" evidence="2">
    <location>
        <begin position="202"/>
        <end position="208"/>
    </location>
</feature>
<feature type="compositionally biased region" description="Low complexity" evidence="4">
    <location>
        <begin position="1"/>
        <end position="12"/>
    </location>
</feature>
<feature type="compositionally biased region" description="Low complexity" evidence="4">
    <location>
        <begin position="118"/>
        <end position="134"/>
    </location>
</feature>
<feature type="compositionally biased region" description="Basic and acidic residues" evidence="4">
    <location>
        <begin position="176"/>
        <end position="185"/>
    </location>
</feature>
<sequence length="225" mass="24714">MRRGRAAAAPAPVTGEPNGSGGSKEIRFRGVRKRPWGRFAAEIRDPWKKTRVWLGTFDSAEDAARAYDAAARALRGPKAKTNFPLPYAHHHQFNQGHNPNNDPFVDSRFYPQDNPIISQRPTSSSMSSTVESFSGPRPPPAPRQQTTASSRKYTRSPPVVPDDCHSDCDSSSSVVDHGDCEKENDNDNDNIASSSFRKPLLFDLNLPPPMDDAGADDLHCTALCL</sequence>